<organism>
    <name type="scientific">Lathyrus hirsutus</name>
    <name type="common">Rough pea</name>
    <name type="synonym">Hairy vetchling</name>
    <dbReference type="NCBI Taxonomy" id="3857"/>
    <lineage>
        <taxon>Eukaryota</taxon>
        <taxon>Viridiplantae</taxon>
        <taxon>Streptophyta</taxon>
        <taxon>Embryophyta</taxon>
        <taxon>Tracheophyta</taxon>
        <taxon>Spermatophyta</taxon>
        <taxon>Magnoliopsida</taxon>
        <taxon>eudicotyledons</taxon>
        <taxon>Gunneridae</taxon>
        <taxon>Pentapetalae</taxon>
        <taxon>rosids</taxon>
        <taxon>fabids</taxon>
        <taxon>Fabales</taxon>
        <taxon>Fabaceae</taxon>
        <taxon>Papilionoideae</taxon>
        <taxon>50 kb inversion clade</taxon>
        <taxon>NPAAA clade</taxon>
        <taxon>Hologalegina</taxon>
        <taxon>IRL clade</taxon>
        <taxon>Fabeae</taxon>
        <taxon>Lathyrus</taxon>
    </lineage>
</organism>
<keyword id="KW-0903">Direct protein sequencing</keyword>
<keyword id="KW-0430">Lectin</keyword>
<comment type="subunit">
    <text>Tetramer of two alpha and two beta chains.</text>
</comment>
<comment type="similarity">
    <text evidence="1">Belongs to the leguminous lectin family.</text>
</comment>
<accession>P07443</accession>
<feature type="chain" id="PRO_0000045880" description="Lectin alpha-1 chain">
    <location>
        <begin position="1"/>
        <end position="54"/>
    </location>
</feature>
<feature type="chain" id="PRO_0000045881" description="Lectin alpha-2 chain">
    <location>
        <begin position="1"/>
        <end position="53"/>
    </location>
</feature>
<proteinExistence type="evidence at protein level"/>
<protein>
    <recommendedName>
        <fullName>Lectin alpha-1 chain</fullName>
    </recommendedName>
    <component>
        <recommendedName>
            <fullName>Lectin alpha-2 chain</fullName>
        </recommendedName>
    </component>
</protein>
<evidence type="ECO:0000305" key="1"/>
<reference key="1">
    <citation type="journal article" date="1986" name="Phytochemistry">
        <title>The amino acid sequences of the alpha subunits of the lectins from the seeds of Lathyrus hirsutus and Lathyrus tingitanus.</title>
        <authorList>
            <person name="Yarwood A."/>
            <person name="Richardson M."/>
            <person name="Sousa-Cavada B."/>
            <person name="Pere D."/>
            <person name="Rouge P."/>
        </authorList>
    </citation>
    <scope>PROTEIN SEQUENCE</scope>
</reference>
<dbReference type="PIR" id="JA0002">
    <property type="entry name" value="LNLD1H"/>
</dbReference>
<dbReference type="PIR" id="JA0003">
    <property type="entry name" value="LNLD2H"/>
</dbReference>
<dbReference type="GO" id="GO:0030246">
    <property type="term" value="F:carbohydrate binding"/>
    <property type="evidence" value="ECO:0007669"/>
    <property type="project" value="UniProtKB-KW"/>
</dbReference>
<dbReference type="Gene3D" id="2.60.120.200">
    <property type="match status" value="1"/>
</dbReference>
<dbReference type="InterPro" id="IPR013320">
    <property type="entry name" value="ConA-like_dom_sf"/>
</dbReference>
<dbReference type="InterPro" id="IPR000985">
    <property type="entry name" value="Lectin_LegA_CS"/>
</dbReference>
<dbReference type="InterPro" id="IPR001220">
    <property type="entry name" value="Legume_lectin_dom"/>
</dbReference>
<dbReference type="Pfam" id="PF00139">
    <property type="entry name" value="Lectin_legB"/>
    <property type="match status" value="1"/>
</dbReference>
<dbReference type="SUPFAM" id="SSF49899">
    <property type="entry name" value="Concanavalin A-like lectins/glucanases"/>
    <property type="match status" value="1"/>
</dbReference>
<dbReference type="PROSITE" id="PS00308">
    <property type="entry name" value="LECTIN_LEGUME_ALPHA"/>
    <property type="match status" value="1"/>
</dbReference>
<sequence length="54" mass="5837">VTSYTLNEVVPLKDVVPEWVRIGFSATTGAEFAAHEVLSWSFHSELGGTSASKQ</sequence>
<name>LECA_LATHI</name>